<feature type="chain" id="PRO_0000288744" description="Chaperone protein HscA homolog">
    <location>
        <begin position="1"/>
        <end position="595"/>
    </location>
</feature>
<keyword id="KW-0067">ATP-binding</keyword>
<keyword id="KW-0143">Chaperone</keyword>
<keyword id="KW-0547">Nucleotide-binding</keyword>
<reference key="1">
    <citation type="journal article" date="2006" name="PLoS Genet.">
        <title>Genome sequence of Rickettsia bellii illuminates the role of amoebae in gene exchanges between intracellular pathogens.</title>
        <authorList>
            <person name="Ogata H."/>
            <person name="La Scola B."/>
            <person name="Audic S."/>
            <person name="Renesto P."/>
            <person name="Blanc G."/>
            <person name="Robert C."/>
            <person name="Fournier P.-E."/>
            <person name="Claverie J.-M."/>
            <person name="Raoult D."/>
        </authorList>
    </citation>
    <scope>NUCLEOTIDE SEQUENCE [LARGE SCALE GENOMIC DNA]</scope>
    <source>
        <strain>RML369-C</strain>
    </source>
</reference>
<organism>
    <name type="scientific">Rickettsia bellii (strain RML369-C)</name>
    <dbReference type="NCBI Taxonomy" id="336407"/>
    <lineage>
        <taxon>Bacteria</taxon>
        <taxon>Pseudomonadati</taxon>
        <taxon>Pseudomonadota</taxon>
        <taxon>Alphaproteobacteria</taxon>
        <taxon>Rickettsiales</taxon>
        <taxon>Rickettsiaceae</taxon>
        <taxon>Rickettsieae</taxon>
        <taxon>Rickettsia</taxon>
        <taxon>belli group</taxon>
    </lineage>
</organism>
<proteinExistence type="inferred from homology"/>
<name>HSCA_RICBR</name>
<protein>
    <recommendedName>
        <fullName>Chaperone protein HscA homolog</fullName>
    </recommendedName>
</protein>
<evidence type="ECO:0000250" key="1"/>
<evidence type="ECO:0000305" key="2"/>
<gene>
    <name type="primary">hscA</name>
    <name type="ordered locus">RBE_0513</name>
</gene>
<dbReference type="EMBL" id="CP000087">
    <property type="protein sequence ID" value="ABE04594.1"/>
    <property type="molecule type" value="Genomic_DNA"/>
</dbReference>
<dbReference type="RefSeq" id="WP_011477185.1">
    <property type="nucleotide sequence ID" value="NC_007940.1"/>
</dbReference>
<dbReference type="SMR" id="Q1RJ70"/>
<dbReference type="KEGG" id="rbe:RBE_0513"/>
<dbReference type="eggNOG" id="COG0443">
    <property type="taxonomic scope" value="Bacteria"/>
</dbReference>
<dbReference type="HOGENOM" id="CLU_005965_2_3_5"/>
<dbReference type="OrthoDB" id="9766019at2"/>
<dbReference type="Proteomes" id="UP000001951">
    <property type="component" value="Chromosome"/>
</dbReference>
<dbReference type="GO" id="GO:0005524">
    <property type="term" value="F:ATP binding"/>
    <property type="evidence" value="ECO:0007669"/>
    <property type="project" value="UniProtKB-KW"/>
</dbReference>
<dbReference type="GO" id="GO:0140662">
    <property type="term" value="F:ATP-dependent protein folding chaperone"/>
    <property type="evidence" value="ECO:0007669"/>
    <property type="project" value="InterPro"/>
</dbReference>
<dbReference type="Gene3D" id="1.20.1270.10">
    <property type="match status" value="1"/>
</dbReference>
<dbReference type="Gene3D" id="3.30.420.40">
    <property type="match status" value="2"/>
</dbReference>
<dbReference type="Gene3D" id="3.90.640.10">
    <property type="entry name" value="Actin, Chain A, domain 4"/>
    <property type="match status" value="1"/>
</dbReference>
<dbReference type="Gene3D" id="2.60.34.10">
    <property type="entry name" value="Substrate Binding Domain Of DNAk, Chain A, domain 1"/>
    <property type="match status" value="1"/>
</dbReference>
<dbReference type="InterPro" id="IPR043129">
    <property type="entry name" value="ATPase_NBD"/>
</dbReference>
<dbReference type="InterPro" id="IPR018181">
    <property type="entry name" value="Heat_shock_70_CS"/>
</dbReference>
<dbReference type="InterPro" id="IPR029048">
    <property type="entry name" value="HSP70_C_sf"/>
</dbReference>
<dbReference type="InterPro" id="IPR029047">
    <property type="entry name" value="HSP70_peptide-bd_sf"/>
</dbReference>
<dbReference type="InterPro" id="IPR013126">
    <property type="entry name" value="Hsp_70_fam"/>
</dbReference>
<dbReference type="NCBIfam" id="NF002399">
    <property type="entry name" value="PRK01433.1"/>
    <property type="match status" value="1"/>
</dbReference>
<dbReference type="PANTHER" id="PTHR19375">
    <property type="entry name" value="HEAT SHOCK PROTEIN 70KDA"/>
    <property type="match status" value="1"/>
</dbReference>
<dbReference type="Pfam" id="PF00012">
    <property type="entry name" value="HSP70"/>
    <property type="match status" value="1"/>
</dbReference>
<dbReference type="PRINTS" id="PR00301">
    <property type="entry name" value="HEATSHOCK70"/>
</dbReference>
<dbReference type="SUPFAM" id="SSF53067">
    <property type="entry name" value="Actin-like ATPase domain"/>
    <property type="match status" value="2"/>
</dbReference>
<dbReference type="SUPFAM" id="SSF100934">
    <property type="entry name" value="Heat shock protein 70kD (HSP70), C-terminal subdomain"/>
    <property type="match status" value="1"/>
</dbReference>
<dbReference type="SUPFAM" id="SSF100920">
    <property type="entry name" value="Heat shock protein 70kD (HSP70), peptide-binding domain"/>
    <property type="match status" value="1"/>
</dbReference>
<dbReference type="PROSITE" id="PS00329">
    <property type="entry name" value="HSP70_2"/>
    <property type="match status" value="1"/>
</dbReference>
<sequence length="595" mass="65673">MQIIEIREPGQAESKQEVKIAVGIDFGTTNSLIAISVGRKVKIIQTEDNKELIPTTIEFTNNNITVGSNKGLRSIKRLFGKTLNEILNTPALFSLVKDYIDLQSQEVKLNFANKQMRIAEIAAEVFIYLKQQAEKELTTEVTQAVITVPAHFNDAARGQVMLAARLAGLEVLRLIAEPTAAAYAYGLNKNQTGCYLVYDLGGGTFDVSILNITEGVFQVIATSGDNMLGGDDIDKIIADYFCNKFSLLDNLDTLRLAKKAKEALLNQDNFEFNNISLDKQTFEQLITPIIGRTINIAKECLEIAGNPNIDGIILVGGVTHITLIKEELYKAFKVNILSDIDPDKAIVYGAALQAENLTTPNIDSLLIDVVPLSLGMELYGGIVEKIIMRNTPIPISVVKEFTTYADNQTGIQFHILQGEREMVADCRTLARFELKGLPPMKAGSIRAEVTFSIDADGILSVSAYEKISNTSHIVEVKPDYGIDTSEVDKVLENAYKNAKLDHAARLLQETVIEAESLIFNIEHAIKELVDLLSENEKHIISSLLNNIKHAIDARDRALINNAVKDFKSKTKKSLNTKINIVISDLLKGKNINQIK</sequence>
<accession>Q1RJ70</accession>
<comment type="function">
    <text evidence="1">Chaperone involved in the maturation of iron-sulfur cluster-containing proteins. Has a low intrinsic ATPase activity which is markedly stimulated by HscB (By similarity).</text>
</comment>
<comment type="similarity">
    <text evidence="2">Belongs to the heat shock protein 70 family.</text>
</comment>